<protein>
    <recommendedName>
        <fullName>SUMO-activating enzyme subunit 1</fullName>
    </recommendedName>
    <alternativeName>
        <fullName>Ubiquitin-like 1-activating enzyme E1A</fullName>
    </alternativeName>
    <component>
        <recommendedName>
            <fullName>SUMO-activating enzyme subunit 1, N-terminally processed</fullName>
        </recommendedName>
    </component>
</protein>
<feature type="chain" id="PRO_0000423292" description="SUMO-activating enzyme subunit 1">
    <location>
        <begin position="1"/>
        <end position="346"/>
    </location>
</feature>
<feature type="initiator methionine" description="Removed; alternate" evidence="3">
    <location>
        <position position="1"/>
    </location>
</feature>
<feature type="chain" id="PRO_0000268867" description="SUMO-activating enzyme subunit 1, N-terminally processed">
    <location>
        <begin position="2"/>
        <end position="346"/>
    </location>
</feature>
<feature type="modified residue" description="N-acetylmethionine" evidence="3">
    <location>
        <position position="1"/>
    </location>
</feature>
<feature type="modified residue" description="N-acetylvaline; in SUMO-activating enzyme subunit 1, N-terminally processed" evidence="3">
    <location>
        <position position="2"/>
    </location>
</feature>
<feature type="modified residue" description="Phosphoserine" evidence="3">
    <location>
        <position position="12"/>
    </location>
</feature>
<feature type="modified residue" description="N6-acetyllysine" evidence="2">
    <location>
        <position position="198"/>
    </location>
</feature>
<feature type="sequence conflict" description="In Ref. 1; CAH92498." evidence="4" ref="1">
    <original>IE</original>
    <variation>VG</variation>
    <location>
        <begin position="115"/>
        <end position="116"/>
    </location>
</feature>
<feature type="sequence conflict" description="In Ref. 1; CAI29626." evidence="4" ref="1">
    <original>F</original>
    <variation>L</variation>
    <location>
        <position position="241"/>
    </location>
</feature>
<feature type="sequence conflict" description="In Ref. 1; CAH93320." evidence="4" ref="1">
    <original>L</original>
    <variation>P</variation>
    <location>
        <position position="270"/>
    </location>
</feature>
<organism>
    <name type="scientific">Pongo abelii</name>
    <name type="common">Sumatran orangutan</name>
    <name type="synonym">Pongo pygmaeus abelii</name>
    <dbReference type="NCBI Taxonomy" id="9601"/>
    <lineage>
        <taxon>Eukaryota</taxon>
        <taxon>Metazoa</taxon>
        <taxon>Chordata</taxon>
        <taxon>Craniata</taxon>
        <taxon>Vertebrata</taxon>
        <taxon>Euteleostomi</taxon>
        <taxon>Mammalia</taxon>
        <taxon>Eutheria</taxon>
        <taxon>Euarchontoglires</taxon>
        <taxon>Primates</taxon>
        <taxon>Haplorrhini</taxon>
        <taxon>Catarrhini</taxon>
        <taxon>Hominidae</taxon>
        <taxon>Pongo</taxon>
    </lineage>
</organism>
<evidence type="ECO:0000250" key="1"/>
<evidence type="ECO:0000250" key="2">
    <source>
        <dbReference type="UniProtKB" id="Q9R1T2"/>
    </source>
</evidence>
<evidence type="ECO:0000250" key="3">
    <source>
        <dbReference type="UniProtKB" id="Q9UBE0"/>
    </source>
</evidence>
<evidence type="ECO:0000305" key="4"/>
<reference key="1">
    <citation type="submission" date="2004-11" db="EMBL/GenBank/DDBJ databases">
        <authorList>
            <consortium name="The German cDNA consortium"/>
        </authorList>
    </citation>
    <scope>NUCLEOTIDE SEQUENCE [LARGE SCALE MRNA]</scope>
    <source>
        <tissue>Brain cortex</tissue>
    </source>
</reference>
<comment type="function">
    <text evidence="1">The heterodimer acts as an E1 ligase for SUMO1, SUMO2, SUMO3, and probably SUMO4. It mediates ATP-dependent activation of SUMO proteins followed by formation of a thioester bond between a SUMO protein and a conserved active site cysteine residue on UBA2/SAE2 (By similarity).</text>
</comment>
<comment type="pathway">
    <text>Protein modification; protein sumoylation.</text>
</comment>
<comment type="subunit">
    <text evidence="1">Heterodimer of SAE1 and UBA2/SAE2. The heterodimer corresponds to the two domains that are encoded on a single polypeptide chain in ubiquitin-activating enzyme E1. Interacts with UBE2I (By similarity).</text>
</comment>
<comment type="subcellular location">
    <subcellularLocation>
        <location evidence="1">Nucleus</location>
    </subcellularLocation>
</comment>
<comment type="similarity">
    <text evidence="4">Belongs to the ubiquitin-activating E1 family.</text>
</comment>
<accession>Q5NVN7</accession>
<accession>Q5R4J6</accession>
<accession>Q5R520</accession>
<accession>Q5R6W2</accession>
<name>SAE1_PONAB</name>
<gene>
    <name type="primary">SAE1</name>
    <name type="synonym">UBLE1A</name>
</gene>
<keyword id="KW-0007">Acetylation</keyword>
<keyword id="KW-0436">Ligase</keyword>
<keyword id="KW-0539">Nucleus</keyword>
<keyword id="KW-0597">Phosphoprotein</keyword>
<keyword id="KW-1185">Reference proteome</keyword>
<keyword id="KW-0833">Ubl conjugation pathway</keyword>
<sequence>MVEKEEAGGGISEEEAAQYDRQIRLWGLEAQKRLRASRVLLVGLKGLGAEIAKNLILAGVKGLTMLDHEQVTPEDPGAQFLIRTGSVGRNRAEASLERAQNLNPMVDVKVDTEDIEKKPESFFTQFDAVCLTCCSRDVIVKVDQICHKNSIKFFTGDVFGYHGYTFANLGEHEFVEEKTKVAKVSQGVEDGPDTKRAKLDSSETTMVKKKVVFCPVKEALEVDWSSEKAKAALKRTTSDYFLLQVLLKFRTDKGRDPSSDTYEEDSELLLQIRNDVLDSLGISPDLLPEDFVRYCFSEMAPVCAVVGGILAQEIVKALSQRDPPHNNFFFFDGMKGNGIVECLGPK</sequence>
<dbReference type="EMBL" id="CR860370">
    <property type="protein sequence ID" value="CAH92498.1"/>
    <property type="molecule type" value="mRNA"/>
</dbReference>
<dbReference type="EMBL" id="CR861062">
    <property type="protein sequence ID" value="CAH93146.1"/>
    <property type="molecule type" value="mRNA"/>
</dbReference>
<dbReference type="EMBL" id="CR861251">
    <property type="protein sequence ID" value="CAH93320.1"/>
    <property type="molecule type" value="mRNA"/>
</dbReference>
<dbReference type="EMBL" id="CR925978">
    <property type="protein sequence ID" value="CAI29626.1"/>
    <property type="molecule type" value="mRNA"/>
</dbReference>
<dbReference type="RefSeq" id="NP_001126955.1">
    <property type="nucleotide sequence ID" value="NM_001133483.1"/>
</dbReference>
<dbReference type="SMR" id="Q5NVN7"/>
<dbReference type="FunCoup" id="Q5NVN7">
    <property type="interactions" value="4787"/>
</dbReference>
<dbReference type="STRING" id="9601.ENSPPYP00000011372"/>
<dbReference type="GeneID" id="100173973"/>
<dbReference type="KEGG" id="pon:100173973"/>
<dbReference type="CTD" id="10055"/>
<dbReference type="eggNOG" id="KOG2014">
    <property type="taxonomic scope" value="Eukaryota"/>
</dbReference>
<dbReference type="HOGENOM" id="CLU_002556_4_0_1"/>
<dbReference type="InParanoid" id="Q5NVN7"/>
<dbReference type="OrthoDB" id="412647at2759"/>
<dbReference type="UniPathway" id="UPA00886"/>
<dbReference type="Proteomes" id="UP000001595">
    <property type="component" value="Unplaced"/>
</dbReference>
<dbReference type="GO" id="GO:0005737">
    <property type="term" value="C:cytoplasm"/>
    <property type="evidence" value="ECO:0007669"/>
    <property type="project" value="TreeGrafter"/>
</dbReference>
<dbReference type="GO" id="GO:0031510">
    <property type="term" value="C:SUMO activating enzyme complex"/>
    <property type="evidence" value="ECO:0000250"/>
    <property type="project" value="UniProtKB"/>
</dbReference>
<dbReference type="GO" id="GO:0019948">
    <property type="term" value="F:SUMO activating enzyme activity"/>
    <property type="evidence" value="ECO:0007669"/>
    <property type="project" value="TreeGrafter"/>
</dbReference>
<dbReference type="GO" id="GO:0016925">
    <property type="term" value="P:protein sumoylation"/>
    <property type="evidence" value="ECO:0000250"/>
    <property type="project" value="UniProtKB"/>
</dbReference>
<dbReference type="CDD" id="cd01492">
    <property type="entry name" value="Aos1_SUMO"/>
    <property type="match status" value="1"/>
</dbReference>
<dbReference type="FunFam" id="3.40.50.720:FF:000274">
    <property type="entry name" value="SUMO-activating enzyme subunit 1 isoform X1"/>
    <property type="match status" value="1"/>
</dbReference>
<dbReference type="Gene3D" id="3.40.50.720">
    <property type="entry name" value="NAD(P)-binding Rossmann-like Domain"/>
    <property type="match status" value="1"/>
</dbReference>
<dbReference type="InterPro" id="IPR045886">
    <property type="entry name" value="ThiF/MoeB/HesA"/>
</dbReference>
<dbReference type="InterPro" id="IPR000594">
    <property type="entry name" value="ThiF_NAD_FAD-bd"/>
</dbReference>
<dbReference type="InterPro" id="IPR035985">
    <property type="entry name" value="Ubiquitin-activating_enz"/>
</dbReference>
<dbReference type="InterPro" id="IPR000011">
    <property type="entry name" value="UBQ/SUMO-activ_enz_E1-like"/>
</dbReference>
<dbReference type="PANTHER" id="PTHR10953:SF201">
    <property type="entry name" value="SUMO-ACTIVATING ENZYME SUBUNIT 1"/>
    <property type="match status" value="1"/>
</dbReference>
<dbReference type="PANTHER" id="PTHR10953">
    <property type="entry name" value="UBIQUITIN-ACTIVATING ENZYME E1"/>
    <property type="match status" value="1"/>
</dbReference>
<dbReference type="Pfam" id="PF00899">
    <property type="entry name" value="ThiF"/>
    <property type="match status" value="1"/>
</dbReference>
<dbReference type="PRINTS" id="PR01849">
    <property type="entry name" value="UBIQUITINACT"/>
</dbReference>
<dbReference type="SUPFAM" id="SSF69572">
    <property type="entry name" value="Activating enzymes of the ubiquitin-like proteins"/>
    <property type="match status" value="1"/>
</dbReference>
<proteinExistence type="evidence at transcript level"/>